<reference key="1">
    <citation type="journal article" date="2004" name="Genome Res.">
        <title>The status, quality, and expansion of the NIH full-length cDNA project: the Mammalian Gene Collection (MGC).</title>
        <authorList>
            <consortium name="The MGC Project Team"/>
        </authorList>
    </citation>
    <scope>NUCLEOTIDE SEQUENCE [LARGE SCALE MRNA]</scope>
    <source>
        <tissue>Spleen</tissue>
    </source>
</reference>
<protein>
    <recommendedName>
        <fullName>Transmembrane protein 231</fullName>
    </recommendedName>
</protein>
<feature type="chain" id="PRO_0000317523" description="Transmembrane protein 231">
    <location>
        <begin position="1"/>
        <end position="315"/>
    </location>
</feature>
<feature type="transmembrane region" description="Helical" evidence="3">
    <location>
        <begin position="23"/>
        <end position="43"/>
    </location>
</feature>
<feature type="transmembrane region" description="Helical" evidence="3">
    <location>
        <begin position="262"/>
        <end position="282"/>
    </location>
</feature>
<feature type="glycosylation site" description="N-linked (GlcNAc...) asparagine" evidence="3">
    <location>
        <position position="194"/>
    </location>
</feature>
<feature type="glycosylation site" description="N-linked (GlcNAc...) asparagine" evidence="3">
    <location>
        <position position="199"/>
    </location>
</feature>
<feature type="glycosylation site" description="N-linked (GlcNAc...) asparagine" evidence="3">
    <location>
        <position position="221"/>
    </location>
</feature>
<sequence length="315" mass="36170">MALYHLFSHPIERAYRAGLCSKAALFLLLATALTYIPPLLVAFRSHGFWLKRSNYEEQPNVRFQHQVLLVALLGPEPGAFLAWSTYPTFNRLQGVHLRVPLVSTREEDRNQDGKMDVLYFKLELPLQSTEQVLGVQLILTFSYQLHRMSTFEMQSMAFLQSSFAVPGSQLHVNGDLRLQQKQPLSYRGLDVRYNVSVINGTSPFAHDYDLTHIVAAYQERNVTTVLSDPNPIWLVGRAAEAPFVIDAVIRYPVEVISYQPGFWEMIKFAWIQYVSILLIFLWVFERIKIFVFQNQVVTSIPVAVPQGEIRKEHLS</sequence>
<dbReference type="EMBL" id="BC089891">
    <property type="protein sequence ID" value="AAH89891.1"/>
    <property type="status" value="ALT_INIT"/>
    <property type="molecule type" value="mRNA"/>
</dbReference>
<dbReference type="RefSeq" id="NP_001257960.1">
    <property type="nucleotide sequence ID" value="NM_001271031.1"/>
</dbReference>
<dbReference type="FunCoup" id="Q5FVM1">
    <property type="interactions" value="780"/>
</dbReference>
<dbReference type="STRING" id="10116.ENSRNOP00000070302"/>
<dbReference type="GlyCosmos" id="Q5FVM1">
    <property type="glycosylation" value="3 sites, No reported glycans"/>
</dbReference>
<dbReference type="GlyGen" id="Q5FVM1">
    <property type="glycosylation" value="3 sites"/>
</dbReference>
<dbReference type="PhosphoSitePlus" id="Q5FVM1"/>
<dbReference type="jPOST" id="Q5FVM1"/>
<dbReference type="PaxDb" id="10116-ENSRNOP00000029280"/>
<dbReference type="GeneID" id="361410"/>
<dbReference type="KEGG" id="rno:361410"/>
<dbReference type="UCSC" id="RGD:1306153">
    <property type="organism name" value="rat"/>
</dbReference>
<dbReference type="AGR" id="RGD:1306153"/>
<dbReference type="CTD" id="79583"/>
<dbReference type="RGD" id="1306153">
    <property type="gene designation" value="Tmem231"/>
</dbReference>
<dbReference type="VEuPathDB" id="HostDB:ENSRNOG00000021517"/>
<dbReference type="eggNOG" id="KOG4838">
    <property type="taxonomic scope" value="Eukaryota"/>
</dbReference>
<dbReference type="HOGENOM" id="CLU_070969_0_0_1"/>
<dbReference type="InParanoid" id="Q5FVM1"/>
<dbReference type="OrthoDB" id="33843at9989"/>
<dbReference type="PhylomeDB" id="Q5FVM1"/>
<dbReference type="PRO" id="PR:Q5FVM1"/>
<dbReference type="Proteomes" id="UP000002494">
    <property type="component" value="Chromosome 19"/>
</dbReference>
<dbReference type="Bgee" id="ENSRNOG00000021517">
    <property type="expression patterns" value="Expressed in testis and 19 other cell types or tissues"/>
</dbReference>
<dbReference type="ExpressionAtlas" id="Q5FVM1">
    <property type="expression patterns" value="baseline and differential"/>
</dbReference>
<dbReference type="GO" id="GO:0060170">
    <property type="term" value="C:ciliary membrane"/>
    <property type="evidence" value="ECO:0000250"/>
    <property type="project" value="UniProtKB"/>
</dbReference>
<dbReference type="GO" id="GO:0035869">
    <property type="term" value="C:ciliary transition zone"/>
    <property type="evidence" value="ECO:0000250"/>
    <property type="project" value="UniProtKB"/>
</dbReference>
<dbReference type="GO" id="GO:0016020">
    <property type="term" value="C:membrane"/>
    <property type="evidence" value="ECO:0000266"/>
    <property type="project" value="RGD"/>
</dbReference>
<dbReference type="GO" id="GO:0036038">
    <property type="term" value="C:MKS complex"/>
    <property type="evidence" value="ECO:0000250"/>
    <property type="project" value="UniProtKB"/>
</dbReference>
<dbReference type="GO" id="GO:0043010">
    <property type="term" value="P:camera-type eye development"/>
    <property type="evidence" value="ECO:0000266"/>
    <property type="project" value="RGD"/>
</dbReference>
<dbReference type="GO" id="GO:0060271">
    <property type="term" value="P:cilium assembly"/>
    <property type="evidence" value="ECO:0000250"/>
    <property type="project" value="UniProtKB"/>
</dbReference>
<dbReference type="GO" id="GO:0042733">
    <property type="term" value="P:embryonic digit morphogenesis"/>
    <property type="evidence" value="ECO:0000266"/>
    <property type="project" value="RGD"/>
</dbReference>
<dbReference type="GO" id="GO:0001701">
    <property type="term" value="P:in utero embryonic development"/>
    <property type="evidence" value="ECO:0000266"/>
    <property type="project" value="RGD"/>
</dbReference>
<dbReference type="GO" id="GO:0060563">
    <property type="term" value="P:neuroepithelial cell differentiation"/>
    <property type="evidence" value="ECO:0000266"/>
    <property type="project" value="RGD"/>
</dbReference>
<dbReference type="GO" id="GO:0032880">
    <property type="term" value="P:regulation of protein localization"/>
    <property type="evidence" value="ECO:0000266"/>
    <property type="project" value="RGD"/>
</dbReference>
<dbReference type="GO" id="GO:0007224">
    <property type="term" value="P:smoothened signaling pathway"/>
    <property type="evidence" value="ECO:0000250"/>
    <property type="project" value="UniProtKB"/>
</dbReference>
<dbReference type="GO" id="GO:0001944">
    <property type="term" value="P:vasculature development"/>
    <property type="evidence" value="ECO:0000266"/>
    <property type="project" value="RGD"/>
</dbReference>
<dbReference type="InterPro" id="IPR019306">
    <property type="entry name" value="TMEM231"/>
</dbReference>
<dbReference type="PANTHER" id="PTHR14605">
    <property type="entry name" value="CHST5 PROTEIN"/>
    <property type="match status" value="1"/>
</dbReference>
<dbReference type="PANTHER" id="PTHR14605:SF1">
    <property type="entry name" value="TRANSMEMBRANE PROTEIN 231"/>
    <property type="match status" value="1"/>
</dbReference>
<dbReference type="Pfam" id="PF10149">
    <property type="entry name" value="TM231"/>
    <property type="match status" value="1"/>
</dbReference>
<keyword id="KW-1003">Cell membrane</keyword>
<keyword id="KW-0966">Cell projection</keyword>
<keyword id="KW-0969">Cilium</keyword>
<keyword id="KW-0970">Cilium biogenesis/degradation</keyword>
<keyword id="KW-0325">Glycoprotein</keyword>
<keyword id="KW-0472">Membrane</keyword>
<keyword id="KW-1185">Reference proteome</keyword>
<keyword id="KW-0812">Transmembrane</keyword>
<keyword id="KW-1133">Transmembrane helix</keyword>
<accession>Q5FVM1</accession>
<organism>
    <name type="scientific">Rattus norvegicus</name>
    <name type="common">Rat</name>
    <dbReference type="NCBI Taxonomy" id="10116"/>
    <lineage>
        <taxon>Eukaryota</taxon>
        <taxon>Metazoa</taxon>
        <taxon>Chordata</taxon>
        <taxon>Craniata</taxon>
        <taxon>Vertebrata</taxon>
        <taxon>Euteleostomi</taxon>
        <taxon>Mammalia</taxon>
        <taxon>Eutheria</taxon>
        <taxon>Euarchontoglires</taxon>
        <taxon>Glires</taxon>
        <taxon>Rodentia</taxon>
        <taxon>Myomorpha</taxon>
        <taxon>Muroidea</taxon>
        <taxon>Muridae</taxon>
        <taxon>Murinae</taxon>
        <taxon>Rattus</taxon>
    </lineage>
</organism>
<gene>
    <name type="primary">Tmem231</name>
</gene>
<proteinExistence type="evidence at transcript level"/>
<name>TM231_RAT</name>
<evidence type="ECO:0000250" key="1"/>
<evidence type="ECO:0000250" key="2">
    <source>
        <dbReference type="UniProtKB" id="Q9H6L2"/>
    </source>
</evidence>
<evidence type="ECO:0000255" key="3"/>
<evidence type="ECO:0000305" key="4"/>
<comment type="function">
    <text evidence="1">Transmembrane component of the tectonic-like complex, a complex localized at the transition zone of primary cilia and acting as a barrier that prevents diffusion of transmembrane proteins between the cilia and plasma membranes. Required for ciliogenesis and sonic hedgehog/SHH signaling (By similarity).</text>
</comment>
<comment type="subunit">
    <text evidence="2">Part of the tectonic-like complex (also named B9 complex). Interacts with TMEM107.</text>
</comment>
<comment type="subcellular location">
    <subcellularLocation>
        <location evidence="1">Cell projection</location>
        <location evidence="1">Cilium membrane</location>
        <topology evidence="1">Multi-pass membrane protein</topology>
    </subcellularLocation>
    <text evidence="1">Localizes to the transition zone of primary cilia; SEPT2 is required for localization to the transition zone.</text>
</comment>
<comment type="similarity">
    <text evidence="4">Belongs to the TMEM231 family.</text>
</comment>
<comment type="sequence caution" evidence="4">
    <conflict type="erroneous initiation">
        <sequence resource="EMBL-CDS" id="AAH89891"/>
    </conflict>
    <text>Extended N-terminus.</text>
</comment>